<name>G6PI2_STRAW</name>
<sequence length="550" mass="60636">MNADSRTRLNQRPEWTALAKHREELAGTHLRDLFAADPGRGAGYTLEVGDLHVDYSKHLVTDETLRLLRELAAATDVFGLRDAMFRGEKINVTEDRAVLHTALRAPRDAVVEVDGENVVPAVHAVLDKMSTFAERVRTGEWTGHTGKPIKNIVNVGIGGSDLGPAMAYEVLRSFTDRSLTVRFVSNVDGADLHEAVRDLDPAETLFVIASKTFTTIETITNATSARDWLLTELKAGQEAVAKHFVALSTNAEKVSEFGIDTANMFEFWDWVGGRYSFDSAIGLSLMIAIGPERFREMLDGFRIVDEHFESAPAEDNVPLLLGLLGIWYGNFHDAQSHAVLPYSHYLSKFTAYLQQLDMESNGKSVQRDGNPVEWETGPVVWGTPGTNGQHAYYQLIHQGTKLIPADFIGFAEPVADLLPGLVAQHDLLMANFFAQTQALAFGKTPDEVRAEGVPEQLVPHKTFKGNHPTTTILAKELTPSVLGQLIALYEHKVFVQGAVWNIDSFDQWGVELGKVLAKRVEPALTEGADVPGLDESTKALVAKYRQLRGR</sequence>
<feature type="chain" id="PRO_0000180748" description="Glucose-6-phosphate isomerase 2">
    <location>
        <begin position="1"/>
        <end position="550"/>
    </location>
</feature>
<feature type="active site" description="Proton donor" evidence="1">
    <location>
        <position position="359"/>
    </location>
</feature>
<feature type="active site" evidence="1">
    <location>
        <position position="390"/>
    </location>
</feature>
<feature type="active site" evidence="1">
    <location>
        <position position="514"/>
    </location>
</feature>
<gene>
    <name evidence="1" type="primary">pgi2</name>
    <name type="ordered locus">SAV_6302</name>
</gene>
<proteinExistence type="inferred from homology"/>
<keyword id="KW-0963">Cytoplasm</keyword>
<keyword id="KW-0312">Gluconeogenesis</keyword>
<keyword id="KW-0324">Glycolysis</keyword>
<keyword id="KW-0413">Isomerase</keyword>
<keyword id="KW-1185">Reference proteome</keyword>
<evidence type="ECO:0000255" key="1">
    <source>
        <dbReference type="HAMAP-Rule" id="MF_00473"/>
    </source>
</evidence>
<organism>
    <name type="scientific">Streptomyces avermitilis (strain ATCC 31267 / DSM 46492 / JCM 5070 / NBRC 14893 / NCIMB 12804 / NRRL 8165 / MA-4680)</name>
    <dbReference type="NCBI Taxonomy" id="227882"/>
    <lineage>
        <taxon>Bacteria</taxon>
        <taxon>Bacillati</taxon>
        <taxon>Actinomycetota</taxon>
        <taxon>Actinomycetes</taxon>
        <taxon>Kitasatosporales</taxon>
        <taxon>Streptomycetaceae</taxon>
        <taxon>Streptomyces</taxon>
    </lineage>
</organism>
<protein>
    <recommendedName>
        <fullName evidence="1">Glucose-6-phosphate isomerase 2</fullName>
        <shortName evidence="1">GPI 2</shortName>
        <ecNumber evidence="1">5.3.1.9</ecNumber>
    </recommendedName>
    <alternativeName>
        <fullName evidence="1">Phosphoglucose isomerase 2</fullName>
        <shortName evidence="1">PGI 2</shortName>
    </alternativeName>
    <alternativeName>
        <fullName evidence="1">Phosphohexose isomerase 2</fullName>
        <shortName evidence="1">PHI 2</shortName>
    </alternativeName>
</protein>
<comment type="function">
    <text evidence="1">Catalyzes the reversible isomerization of glucose-6-phosphate to fructose-6-phosphate.</text>
</comment>
<comment type="catalytic activity">
    <reaction evidence="1">
        <text>alpha-D-glucose 6-phosphate = beta-D-fructose 6-phosphate</text>
        <dbReference type="Rhea" id="RHEA:11816"/>
        <dbReference type="ChEBI" id="CHEBI:57634"/>
        <dbReference type="ChEBI" id="CHEBI:58225"/>
        <dbReference type="EC" id="5.3.1.9"/>
    </reaction>
</comment>
<comment type="pathway">
    <text evidence="1">Carbohydrate biosynthesis; gluconeogenesis.</text>
</comment>
<comment type="pathway">
    <text evidence="1">Carbohydrate degradation; glycolysis; D-glyceraldehyde 3-phosphate and glycerone phosphate from D-glucose: step 2/4.</text>
</comment>
<comment type="subcellular location">
    <subcellularLocation>
        <location evidence="1">Cytoplasm</location>
    </subcellularLocation>
</comment>
<comment type="similarity">
    <text evidence="1">Belongs to the GPI family.</text>
</comment>
<dbReference type="EC" id="5.3.1.9" evidence="1"/>
<dbReference type="EMBL" id="BA000030">
    <property type="protein sequence ID" value="BAC74013.1"/>
    <property type="molecule type" value="Genomic_DNA"/>
</dbReference>
<dbReference type="SMR" id="Q829V7"/>
<dbReference type="GeneID" id="41543377"/>
<dbReference type="KEGG" id="sma:SAVERM_6302"/>
<dbReference type="eggNOG" id="COG0166">
    <property type="taxonomic scope" value="Bacteria"/>
</dbReference>
<dbReference type="HOGENOM" id="CLU_017947_3_1_11"/>
<dbReference type="OrthoDB" id="140919at2"/>
<dbReference type="UniPathway" id="UPA00109">
    <property type="reaction ID" value="UER00181"/>
</dbReference>
<dbReference type="UniPathway" id="UPA00138"/>
<dbReference type="Proteomes" id="UP000000428">
    <property type="component" value="Chromosome"/>
</dbReference>
<dbReference type="GO" id="GO:0005829">
    <property type="term" value="C:cytosol"/>
    <property type="evidence" value="ECO:0007669"/>
    <property type="project" value="TreeGrafter"/>
</dbReference>
<dbReference type="GO" id="GO:0097367">
    <property type="term" value="F:carbohydrate derivative binding"/>
    <property type="evidence" value="ECO:0007669"/>
    <property type="project" value="InterPro"/>
</dbReference>
<dbReference type="GO" id="GO:0004347">
    <property type="term" value="F:glucose-6-phosphate isomerase activity"/>
    <property type="evidence" value="ECO:0007669"/>
    <property type="project" value="UniProtKB-UniRule"/>
</dbReference>
<dbReference type="GO" id="GO:0048029">
    <property type="term" value="F:monosaccharide binding"/>
    <property type="evidence" value="ECO:0007669"/>
    <property type="project" value="TreeGrafter"/>
</dbReference>
<dbReference type="GO" id="GO:0006094">
    <property type="term" value="P:gluconeogenesis"/>
    <property type="evidence" value="ECO:0007669"/>
    <property type="project" value="UniProtKB-UniRule"/>
</dbReference>
<dbReference type="GO" id="GO:0051156">
    <property type="term" value="P:glucose 6-phosphate metabolic process"/>
    <property type="evidence" value="ECO:0007669"/>
    <property type="project" value="TreeGrafter"/>
</dbReference>
<dbReference type="GO" id="GO:0006096">
    <property type="term" value="P:glycolytic process"/>
    <property type="evidence" value="ECO:0007669"/>
    <property type="project" value="UniProtKB-UniRule"/>
</dbReference>
<dbReference type="CDD" id="cd05015">
    <property type="entry name" value="SIS_PGI_1"/>
    <property type="match status" value="1"/>
</dbReference>
<dbReference type="CDD" id="cd05016">
    <property type="entry name" value="SIS_PGI_2"/>
    <property type="match status" value="1"/>
</dbReference>
<dbReference type="FunFam" id="1.10.1390.10:FF:000001">
    <property type="entry name" value="Glucose-6-phosphate isomerase"/>
    <property type="match status" value="1"/>
</dbReference>
<dbReference type="FunFam" id="3.40.50.10490:FF:000018">
    <property type="entry name" value="Glucose-6-phosphate isomerase"/>
    <property type="match status" value="1"/>
</dbReference>
<dbReference type="Gene3D" id="1.10.1390.10">
    <property type="match status" value="1"/>
</dbReference>
<dbReference type="Gene3D" id="3.40.50.10490">
    <property type="entry name" value="Glucose-6-phosphate isomerase like protein, domain 1"/>
    <property type="match status" value="2"/>
</dbReference>
<dbReference type="HAMAP" id="MF_00473">
    <property type="entry name" value="G6P_isomerase"/>
    <property type="match status" value="1"/>
</dbReference>
<dbReference type="InterPro" id="IPR001672">
    <property type="entry name" value="G6P_Isomerase"/>
</dbReference>
<dbReference type="InterPro" id="IPR023096">
    <property type="entry name" value="G6P_Isomerase_C"/>
</dbReference>
<dbReference type="InterPro" id="IPR018189">
    <property type="entry name" value="Phosphoglucose_isomerase_CS"/>
</dbReference>
<dbReference type="InterPro" id="IPR046348">
    <property type="entry name" value="SIS_dom_sf"/>
</dbReference>
<dbReference type="InterPro" id="IPR035476">
    <property type="entry name" value="SIS_PGI_1"/>
</dbReference>
<dbReference type="InterPro" id="IPR035482">
    <property type="entry name" value="SIS_PGI_2"/>
</dbReference>
<dbReference type="NCBIfam" id="NF001211">
    <property type="entry name" value="PRK00179.1"/>
    <property type="match status" value="1"/>
</dbReference>
<dbReference type="PANTHER" id="PTHR11469">
    <property type="entry name" value="GLUCOSE-6-PHOSPHATE ISOMERASE"/>
    <property type="match status" value="1"/>
</dbReference>
<dbReference type="PANTHER" id="PTHR11469:SF1">
    <property type="entry name" value="GLUCOSE-6-PHOSPHATE ISOMERASE"/>
    <property type="match status" value="1"/>
</dbReference>
<dbReference type="Pfam" id="PF00342">
    <property type="entry name" value="PGI"/>
    <property type="match status" value="1"/>
</dbReference>
<dbReference type="PRINTS" id="PR00662">
    <property type="entry name" value="G6PISOMERASE"/>
</dbReference>
<dbReference type="SUPFAM" id="SSF53697">
    <property type="entry name" value="SIS domain"/>
    <property type="match status" value="1"/>
</dbReference>
<dbReference type="PROSITE" id="PS00765">
    <property type="entry name" value="P_GLUCOSE_ISOMERASE_1"/>
    <property type="match status" value="1"/>
</dbReference>
<dbReference type="PROSITE" id="PS00174">
    <property type="entry name" value="P_GLUCOSE_ISOMERASE_2"/>
    <property type="match status" value="1"/>
</dbReference>
<dbReference type="PROSITE" id="PS51463">
    <property type="entry name" value="P_GLUCOSE_ISOMERASE_3"/>
    <property type="match status" value="1"/>
</dbReference>
<reference key="1">
    <citation type="journal article" date="2001" name="Proc. Natl. Acad. Sci. U.S.A.">
        <title>Genome sequence of an industrial microorganism Streptomyces avermitilis: deducing the ability of producing secondary metabolites.</title>
        <authorList>
            <person name="Omura S."/>
            <person name="Ikeda H."/>
            <person name="Ishikawa J."/>
            <person name="Hanamoto A."/>
            <person name="Takahashi C."/>
            <person name="Shinose M."/>
            <person name="Takahashi Y."/>
            <person name="Horikawa H."/>
            <person name="Nakazawa H."/>
            <person name="Osonoe T."/>
            <person name="Kikuchi H."/>
            <person name="Shiba T."/>
            <person name="Sakaki Y."/>
            <person name="Hattori M."/>
        </authorList>
    </citation>
    <scope>NUCLEOTIDE SEQUENCE [LARGE SCALE GENOMIC DNA]</scope>
    <source>
        <strain>ATCC 31267 / DSM 46492 / JCM 5070 / NBRC 14893 / NCIMB 12804 / NRRL 8165 / MA-4680</strain>
    </source>
</reference>
<reference key="2">
    <citation type="journal article" date="2003" name="Nat. Biotechnol.">
        <title>Complete genome sequence and comparative analysis of the industrial microorganism Streptomyces avermitilis.</title>
        <authorList>
            <person name="Ikeda H."/>
            <person name="Ishikawa J."/>
            <person name="Hanamoto A."/>
            <person name="Shinose M."/>
            <person name="Kikuchi H."/>
            <person name="Shiba T."/>
            <person name="Sakaki Y."/>
            <person name="Hattori M."/>
            <person name="Omura S."/>
        </authorList>
    </citation>
    <scope>NUCLEOTIDE SEQUENCE [LARGE SCALE GENOMIC DNA]</scope>
    <source>
        <strain>ATCC 31267 / DSM 46492 / JCM 5070 / NBRC 14893 / NCIMB 12804 / NRRL 8165 / MA-4680</strain>
    </source>
</reference>
<accession>Q829V7</accession>